<protein>
    <recommendedName>
        <fullName evidence="1">Small ribosomal subunit biogenesis GTPase RsgA</fullName>
        <ecNumber evidence="1">3.6.1.-</ecNumber>
    </recommendedName>
</protein>
<comment type="function">
    <text evidence="1">One of several proteins that assist in the late maturation steps of the functional core of the 30S ribosomal subunit. Helps release RbfA from mature subunits. May play a role in the assembly of ribosomal proteins into the subunit. Circularly permuted GTPase that catalyzes slow GTP hydrolysis, GTPase activity is stimulated by the 30S ribosomal subunit.</text>
</comment>
<comment type="cofactor">
    <cofactor evidence="1">
        <name>Zn(2+)</name>
        <dbReference type="ChEBI" id="CHEBI:29105"/>
    </cofactor>
    <text evidence="1">Binds 1 zinc ion per subunit.</text>
</comment>
<comment type="subunit">
    <text evidence="1">Monomer. Associates with 30S ribosomal subunit, binds 16S rRNA.</text>
</comment>
<comment type="subcellular location">
    <subcellularLocation>
        <location evidence="1">Cytoplasm</location>
    </subcellularLocation>
</comment>
<comment type="similarity">
    <text evidence="1">Belongs to the TRAFAC class YlqF/YawG GTPase family. RsgA subfamily.</text>
</comment>
<keyword id="KW-0963">Cytoplasm</keyword>
<keyword id="KW-0342">GTP-binding</keyword>
<keyword id="KW-0378">Hydrolase</keyword>
<keyword id="KW-0479">Metal-binding</keyword>
<keyword id="KW-0547">Nucleotide-binding</keyword>
<keyword id="KW-0690">Ribosome biogenesis</keyword>
<keyword id="KW-0694">RNA-binding</keyword>
<keyword id="KW-0699">rRNA-binding</keyword>
<keyword id="KW-0862">Zinc</keyword>
<evidence type="ECO:0000255" key="1">
    <source>
        <dbReference type="HAMAP-Rule" id="MF_01820"/>
    </source>
</evidence>
<evidence type="ECO:0000255" key="2">
    <source>
        <dbReference type="PROSITE-ProRule" id="PRU01058"/>
    </source>
</evidence>
<evidence type="ECO:0000256" key="3">
    <source>
        <dbReference type="SAM" id="MobiDB-lite"/>
    </source>
</evidence>
<name>RSGA_SALHS</name>
<accession>B4TF97</accession>
<sequence>MSKNKLSKGQQRRVNANHQRRLKTSAEKADYDDNLFGEPAEGIVISRFGMHADVESADGEVHRCNIRRTIRSLVTGDRVVWRPGKAAAEGVNVKGIVEAVHERTSVLTRPDFYDGVKPIAANIDQIVIVSAILPELSLNIIDRYLVGCETLQVEPLIVLNKIDLLDDEGMDFVNEQMDIYRNIGYRVLMVSSHTQDGLKPLEEALTGRISIFAGQSGVGKSSLLNALLGLQNEILTNDVSNVSGLGQHTTTAARLYHFPHGGDVIDSPGVREFGLWHLEPEQITQGFVEFHDYLGHCKYRDCKHDADPGCAIREAVENGAIAETRFENYHRILESMAQVKTRKNFSDTDD</sequence>
<gene>
    <name evidence="1" type="primary">rsgA</name>
    <name type="ordered locus">SeHA_C4767</name>
</gene>
<reference key="1">
    <citation type="journal article" date="2011" name="J. Bacteriol.">
        <title>Comparative genomics of 28 Salmonella enterica isolates: evidence for CRISPR-mediated adaptive sublineage evolution.</title>
        <authorList>
            <person name="Fricke W.F."/>
            <person name="Mammel M.K."/>
            <person name="McDermott P.F."/>
            <person name="Tartera C."/>
            <person name="White D.G."/>
            <person name="Leclerc J.E."/>
            <person name="Ravel J."/>
            <person name="Cebula T.A."/>
        </authorList>
    </citation>
    <scope>NUCLEOTIDE SEQUENCE [LARGE SCALE GENOMIC DNA]</scope>
    <source>
        <strain>SL476</strain>
    </source>
</reference>
<organism>
    <name type="scientific">Salmonella heidelberg (strain SL476)</name>
    <dbReference type="NCBI Taxonomy" id="454169"/>
    <lineage>
        <taxon>Bacteria</taxon>
        <taxon>Pseudomonadati</taxon>
        <taxon>Pseudomonadota</taxon>
        <taxon>Gammaproteobacteria</taxon>
        <taxon>Enterobacterales</taxon>
        <taxon>Enterobacteriaceae</taxon>
        <taxon>Salmonella</taxon>
    </lineage>
</organism>
<feature type="chain" id="PRO_1000188135" description="Small ribosomal subunit biogenesis GTPase RsgA">
    <location>
        <begin position="1"/>
        <end position="350"/>
    </location>
</feature>
<feature type="domain" description="CP-type G" evidence="2">
    <location>
        <begin position="104"/>
        <end position="273"/>
    </location>
</feature>
<feature type="region of interest" description="Disordered" evidence="3">
    <location>
        <begin position="1"/>
        <end position="27"/>
    </location>
</feature>
<feature type="compositionally biased region" description="Polar residues" evidence="3">
    <location>
        <begin position="1"/>
        <end position="17"/>
    </location>
</feature>
<feature type="binding site" evidence="1">
    <location>
        <begin position="160"/>
        <end position="163"/>
    </location>
    <ligand>
        <name>GTP</name>
        <dbReference type="ChEBI" id="CHEBI:37565"/>
    </ligand>
</feature>
<feature type="binding site" evidence="1">
    <location>
        <begin position="214"/>
        <end position="222"/>
    </location>
    <ligand>
        <name>GTP</name>
        <dbReference type="ChEBI" id="CHEBI:37565"/>
    </ligand>
</feature>
<feature type="binding site" evidence="1">
    <location>
        <position position="297"/>
    </location>
    <ligand>
        <name>Zn(2+)</name>
        <dbReference type="ChEBI" id="CHEBI:29105"/>
    </ligand>
</feature>
<feature type="binding site" evidence="1">
    <location>
        <position position="302"/>
    </location>
    <ligand>
        <name>Zn(2+)</name>
        <dbReference type="ChEBI" id="CHEBI:29105"/>
    </ligand>
</feature>
<feature type="binding site" evidence="1">
    <location>
        <position position="304"/>
    </location>
    <ligand>
        <name>Zn(2+)</name>
        <dbReference type="ChEBI" id="CHEBI:29105"/>
    </ligand>
</feature>
<feature type="binding site" evidence="1">
    <location>
        <position position="310"/>
    </location>
    <ligand>
        <name>Zn(2+)</name>
        <dbReference type="ChEBI" id="CHEBI:29105"/>
    </ligand>
</feature>
<dbReference type="EC" id="3.6.1.-" evidence="1"/>
<dbReference type="EMBL" id="CP001120">
    <property type="protein sequence ID" value="ACF69554.1"/>
    <property type="molecule type" value="Genomic_DNA"/>
</dbReference>
<dbReference type="RefSeq" id="WP_000041945.1">
    <property type="nucleotide sequence ID" value="NC_011083.1"/>
</dbReference>
<dbReference type="SMR" id="B4TF97"/>
<dbReference type="KEGG" id="seh:SeHA_C4767"/>
<dbReference type="HOGENOM" id="CLU_033617_2_0_6"/>
<dbReference type="Proteomes" id="UP000001866">
    <property type="component" value="Chromosome"/>
</dbReference>
<dbReference type="GO" id="GO:0005737">
    <property type="term" value="C:cytoplasm"/>
    <property type="evidence" value="ECO:0007669"/>
    <property type="project" value="UniProtKB-SubCell"/>
</dbReference>
<dbReference type="GO" id="GO:0005525">
    <property type="term" value="F:GTP binding"/>
    <property type="evidence" value="ECO:0007669"/>
    <property type="project" value="UniProtKB-UniRule"/>
</dbReference>
<dbReference type="GO" id="GO:0003924">
    <property type="term" value="F:GTPase activity"/>
    <property type="evidence" value="ECO:0007669"/>
    <property type="project" value="UniProtKB-UniRule"/>
</dbReference>
<dbReference type="GO" id="GO:0046872">
    <property type="term" value="F:metal ion binding"/>
    <property type="evidence" value="ECO:0007669"/>
    <property type="project" value="UniProtKB-KW"/>
</dbReference>
<dbReference type="GO" id="GO:0019843">
    <property type="term" value="F:rRNA binding"/>
    <property type="evidence" value="ECO:0007669"/>
    <property type="project" value="UniProtKB-KW"/>
</dbReference>
<dbReference type="GO" id="GO:0042274">
    <property type="term" value="P:ribosomal small subunit biogenesis"/>
    <property type="evidence" value="ECO:0007669"/>
    <property type="project" value="UniProtKB-UniRule"/>
</dbReference>
<dbReference type="CDD" id="cd01854">
    <property type="entry name" value="YjeQ_EngC"/>
    <property type="match status" value="1"/>
</dbReference>
<dbReference type="FunFam" id="1.10.40.50:FF:000001">
    <property type="entry name" value="Small ribosomal subunit biogenesis GTPase RsgA"/>
    <property type="match status" value="1"/>
</dbReference>
<dbReference type="FunFam" id="3.40.50.300:FF:000389">
    <property type="entry name" value="Small ribosomal subunit biogenesis GTPase RsgA"/>
    <property type="match status" value="1"/>
</dbReference>
<dbReference type="Gene3D" id="2.40.50.140">
    <property type="entry name" value="Nucleic acid-binding proteins"/>
    <property type="match status" value="1"/>
</dbReference>
<dbReference type="Gene3D" id="3.40.50.300">
    <property type="entry name" value="P-loop containing nucleotide triphosphate hydrolases"/>
    <property type="match status" value="1"/>
</dbReference>
<dbReference type="Gene3D" id="1.10.40.50">
    <property type="entry name" value="Probable gtpase engc, domain 3"/>
    <property type="match status" value="1"/>
</dbReference>
<dbReference type="HAMAP" id="MF_01820">
    <property type="entry name" value="GTPase_RsgA"/>
    <property type="match status" value="1"/>
</dbReference>
<dbReference type="InterPro" id="IPR030378">
    <property type="entry name" value="G_CP_dom"/>
</dbReference>
<dbReference type="InterPro" id="IPR012340">
    <property type="entry name" value="NA-bd_OB-fold"/>
</dbReference>
<dbReference type="InterPro" id="IPR027417">
    <property type="entry name" value="P-loop_NTPase"/>
</dbReference>
<dbReference type="InterPro" id="IPR004881">
    <property type="entry name" value="Ribosome_biogen_GTPase_RsgA"/>
</dbReference>
<dbReference type="InterPro" id="IPR010914">
    <property type="entry name" value="RsgA_GTPase_dom"/>
</dbReference>
<dbReference type="NCBIfam" id="NF008931">
    <property type="entry name" value="PRK12288.1"/>
    <property type="match status" value="1"/>
</dbReference>
<dbReference type="NCBIfam" id="TIGR00157">
    <property type="entry name" value="ribosome small subunit-dependent GTPase A"/>
    <property type="match status" value="1"/>
</dbReference>
<dbReference type="PANTHER" id="PTHR32120">
    <property type="entry name" value="SMALL RIBOSOMAL SUBUNIT BIOGENESIS GTPASE RSGA"/>
    <property type="match status" value="1"/>
</dbReference>
<dbReference type="PANTHER" id="PTHR32120:SF11">
    <property type="entry name" value="SMALL RIBOSOMAL SUBUNIT BIOGENESIS GTPASE RSGA 1, MITOCHONDRIAL-RELATED"/>
    <property type="match status" value="1"/>
</dbReference>
<dbReference type="Pfam" id="PF03193">
    <property type="entry name" value="RsgA_GTPase"/>
    <property type="match status" value="1"/>
</dbReference>
<dbReference type="SUPFAM" id="SSF52540">
    <property type="entry name" value="P-loop containing nucleoside triphosphate hydrolases"/>
    <property type="match status" value="1"/>
</dbReference>
<dbReference type="PROSITE" id="PS50936">
    <property type="entry name" value="ENGC_GTPASE"/>
    <property type="match status" value="1"/>
</dbReference>
<dbReference type="PROSITE" id="PS51721">
    <property type="entry name" value="G_CP"/>
    <property type="match status" value="1"/>
</dbReference>
<proteinExistence type="inferred from homology"/>